<proteinExistence type="evidence at protein level"/>
<name>BIOH_KLEP7</name>
<feature type="chain" id="PRO_1000067270" description="Pimeloyl-[acyl-carrier protein] methyl ester esterase">
    <location>
        <begin position="1"/>
        <end position="257"/>
    </location>
</feature>
<feature type="domain" description="AB hydrolase-1" evidence="1">
    <location>
        <begin position="15"/>
        <end position="241"/>
    </location>
</feature>
<feature type="active site" description="Nucleophile" evidence="2">
    <location>
        <position position="82"/>
    </location>
</feature>
<feature type="active site" evidence="2">
    <location>
        <position position="207"/>
    </location>
</feature>
<feature type="active site" evidence="2">
    <location>
        <position position="235"/>
    </location>
</feature>
<feature type="binding site" evidence="2">
    <location>
        <position position="22"/>
    </location>
    <ligand>
        <name>substrate</name>
    </ligand>
</feature>
<feature type="binding site" evidence="2">
    <location>
        <begin position="82"/>
        <end position="83"/>
    </location>
    <ligand>
        <name>substrate</name>
    </ligand>
</feature>
<feature type="binding site" evidence="2">
    <location>
        <begin position="143"/>
        <end position="147"/>
    </location>
    <ligand>
        <name>substrate</name>
    </ligand>
</feature>
<feature type="binding site" evidence="2">
    <location>
        <position position="235"/>
    </location>
    <ligand>
        <name>substrate</name>
    </ligand>
</feature>
<feature type="strand" evidence="3">
    <location>
        <begin position="6"/>
        <end position="9"/>
    </location>
</feature>
<feature type="strand" evidence="3">
    <location>
        <begin position="13"/>
        <end position="19"/>
    </location>
</feature>
<feature type="helix" evidence="3">
    <location>
        <begin position="26"/>
        <end position="29"/>
    </location>
</feature>
<feature type="turn" evidence="3">
    <location>
        <begin position="30"/>
        <end position="32"/>
    </location>
</feature>
<feature type="helix" evidence="3">
    <location>
        <begin position="33"/>
        <end position="36"/>
    </location>
</feature>
<feature type="turn" evidence="3">
    <location>
        <begin position="37"/>
        <end position="39"/>
    </location>
</feature>
<feature type="strand" evidence="3">
    <location>
        <begin position="40"/>
        <end position="45"/>
    </location>
</feature>
<feature type="helix" evidence="3">
    <location>
        <begin position="51"/>
        <end position="53"/>
    </location>
</feature>
<feature type="helix" evidence="3">
    <location>
        <begin position="61"/>
        <end position="69"/>
    </location>
</feature>
<feature type="strand" evidence="3">
    <location>
        <begin position="74"/>
        <end position="81"/>
    </location>
</feature>
<feature type="helix" evidence="3">
    <location>
        <begin position="83"/>
        <end position="94"/>
    </location>
</feature>
<feature type="helix" evidence="3">
    <location>
        <begin position="96"/>
        <end position="98"/>
    </location>
</feature>
<feature type="strand" evidence="3">
    <location>
        <begin position="99"/>
        <end position="106"/>
    </location>
</feature>
<feature type="helix" evidence="3">
    <location>
        <begin position="122"/>
        <end position="134"/>
    </location>
</feature>
<feature type="helix" evidence="3">
    <location>
        <begin position="136"/>
        <end position="145"/>
    </location>
</feature>
<feature type="helix" evidence="3">
    <location>
        <begin position="154"/>
        <end position="166"/>
    </location>
</feature>
<feature type="helix" evidence="3">
    <location>
        <begin position="173"/>
        <end position="185"/>
    </location>
</feature>
<feature type="turn" evidence="3">
    <location>
        <begin position="189"/>
        <end position="194"/>
    </location>
</feature>
<feature type="strand" evidence="3">
    <location>
        <begin position="199"/>
        <end position="204"/>
    </location>
</feature>
<feature type="strand" evidence="3">
    <location>
        <begin position="208"/>
        <end position="210"/>
    </location>
</feature>
<feature type="helix" evidence="3">
    <location>
        <begin position="215"/>
        <end position="218"/>
    </location>
</feature>
<feature type="strand" evidence="3">
    <location>
        <begin position="226"/>
        <end position="230"/>
    </location>
</feature>
<feature type="helix" evidence="3">
    <location>
        <begin position="237"/>
        <end position="240"/>
    </location>
</feature>
<feature type="helix" evidence="3">
    <location>
        <begin position="242"/>
        <end position="256"/>
    </location>
</feature>
<dbReference type="EC" id="3.1.1.85" evidence="2"/>
<dbReference type="EMBL" id="CP000647">
    <property type="protein sequence ID" value="ABR79169.1"/>
    <property type="molecule type" value="Genomic_DNA"/>
</dbReference>
<dbReference type="RefSeq" id="WP_004174021.1">
    <property type="nucleotide sequence ID" value="NC_009648.1"/>
</dbReference>
<dbReference type="PDB" id="6K5E">
    <property type="method" value="X-ray"/>
    <property type="resolution" value="2.26 A"/>
    <property type="chains" value="A/B/C/D/E/F=1-257"/>
</dbReference>
<dbReference type="PDBsum" id="6K5E"/>
<dbReference type="SMR" id="A6TF35"/>
<dbReference type="STRING" id="272620.KPN_03782"/>
<dbReference type="ESTHER" id="klep3-bioh">
    <property type="family name" value="BioH"/>
</dbReference>
<dbReference type="jPOST" id="A6TF35"/>
<dbReference type="PaxDb" id="272620-KPN_03782"/>
<dbReference type="EnsemblBacteria" id="ABR79169">
    <property type="protein sequence ID" value="ABR79169"/>
    <property type="gene ID" value="KPN_03782"/>
</dbReference>
<dbReference type="KEGG" id="kpn:KPN_03782"/>
<dbReference type="HOGENOM" id="CLU_020336_12_2_6"/>
<dbReference type="UniPathway" id="UPA00078"/>
<dbReference type="Proteomes" id="UP000000265">
    <property type="component" value="Chromosome"/>
</dbReference>
<dbReference type="GO" id="GO:0005737">
    <property type="term" value="C:cytoplasm"/>
    <property type="evidence" value="ECO:0007669"/>
    <property type="project" value="UniProtKB-SubCell"/>
</dbReference>
<dbReference type="GO" id="GO:0090499">
    <property type="term" value="F:pimelyl-[acyl-carrier protein] methyl ester esterase activity"/>
    <property type="evidence" value="ECO:0007669"/>
    <property type="project" value="UniProtKB-EC"/>
</dbReference>
<dbReference type="GO" id="GO:0009102">
    <property type="term" value="P:biotin biosynthetic process"/>
    <property type="evidence" value="ECO:0007669"/>
    <property type="project" value="UniProtKB-UniRule"/>
</dbReference>
<dbReference type="FunFam" id="3.40.50.1820:FF:000045">
    <property type="entry name" value="Pimeloyl-[acyl-carrier protein] methyl ester esterase"/>
    <property type="match status" value="1"/>
</dbReference>
<dbReference type="Gene3D" id="3.40.50.1820">
    <property type="entry name" value="alpha/beta hydrolase"/>
    <property type="match status" value="1"/>
</dbReference>
<dbReference type="HAMAP" id="MF_01260">
    <property type="entry name" value="Carboxylester"/>
    <property type="match status" value="1"/>
</dbReference>
<dbReference type="InterPro" id="IPR000073">
    <property type="entry name" value="AB_hydrolase_1"/>
</dbReference>
<dbReference type="InterPro" id="IPR029058">
    <property type="entry name" value="AB_hydrolase_fold"/>
</dbReference>
<dbReference type="InterPro" id="IPR010076">
    <property type="entry name" value="BioH"/>
</dbReference>
<dbReference type="InterPro" id="IPR050228">
    <property type="entry name" value="Carboxylesterase_BioH"/>
</dbReference>
<dbReference type="NCBIfam" id="TIGR01738">
    <property type="entry name" value="bioH"/>
    <property type="match status" value="1"/>
</dbReference>
<dbReference type="NCBIfam" id="NF007674">
    <property type="entry name" value="PRK10349.1"/>
    <property type="match status" value="1"/>
</dbReference>
<dbReference type="PANTHER" id="PTHR43194">
    <property type="entry name" value="HYDROLASE ALPHA/BETA FOLD FAMILY"/>
    <property type="match status" value="1"/>
</dbReference>
<dbReference type="PANTHER" id="PTHR43194:SF5">
    <property type="entry name" value="PIMELOYL-[ACYL-CARRIER PROTEIN] METHYL ESTER ESTERASE"/>
    <property type="match status" value="1"/>
</dbReference>
<dbReference type="Pfam" id="PF00561">
    <property type="entry name" value="Abhydrolase_1"/>
    <property type="match status" value="1"/>
</dbReference>
<dbReference type="SUPFAM" id="SSF53474">
    <property type="entry name" value="alpha/beta-Hydrolases"/>
    <property type="match status" value="1"/>
</dbReference>
<keyword id="KW-0002">3D-structure</keyword>
<keyword id="KW-0093">Biotin biosynthesis</keyword>
<keyword id="KW-0963">Cytoplasm</keyword>
<keyword id="KW-0378">Hydrolase</keyword>
<keyword id="KW-0719">Serine esterase</keyword>
<comment type="function">
    <text evidence="2">The physiological role of BioH is to remove the methyl group introduced by BioC when the pimeloyl moiety is complete. It allows to synthesize pimeloyl-ACP via the fatty acid synthetic pathway through the hydrolysis of the ester bonds of pimeloyl-ACP esters.</text>
</comment>
<comment type="catalytic activity">
    <reaction evidence="2">
        <text>6-carboxyhexanoyl-[ACP] methyl ester + H2O = 6-carboxyhexanoyl-[ACP] + methanol + H(+)</text>
        <dbReference type="Rhea" id="RHEA:42700"/>
        <dbReference type="Rhea" id="RHEA-COMP:9955"/>
        <dbReference type="Rhea" id="RHEA-COMP:10186"/>
        <dbReference type="ChEBI" id="CHEBI:15377"/>
        <dbReference type="ChEBI" id="CHEBI:15378"/>
        <dbReference type="ChEBI" id="CHEBI:17790"/>
        <dbReference type="ChEBI" id="CHEBI:78846"/>
        <dbReference type="ChEBI" id="CHEBI:82735"/>
        <dbReference type="EC" id="3.1.1.85"/>
    </reaction>
</comment>
<comment type="pathway">
    <text evidence="2">Cofactor biosynthesis; biotin biosynthesis.</text>
</comment>
<comment type="subunit">
    <text evidence="2">Monomer.</text>
</comment>
<comment type="subcellular location">
    <subcellularLocation>
        <location evidence="2">Cytoplasm</location>
    </subcellularLocation>
</comment>
<comment type="similarity">
    <text evidence="2">Belongs to the AB hydrolase superfamily. Carboxylesterase BioH family.</text>
</comment>
<evidence type="ECO:0000255" key="1"/>
<evidence type="ECO:0000255" key="2">
    <source>
        <dbReference type="HAMAP-Rule" id="MF_01260"/>
    </source>
</evidence>
<evidence type="ECO:0007829" key="3">
    <source>
        <dbReference type="PDB" id="6K5E"/>
    </source>
</evidence>
<accession>A6TF35</accession>
<protein>
    <recommendedName>
        <fullName evidence="2">Pimeloyl-[acyl-carrier protein] methyl ester esterase</fullName>
        <ecNumber evidence="2">3.1.1.85</ecNumber>
    </recommendedName>
    <alternativeName>
        <fullName evidence="2">Biotin synthesis protein BioH</fullName>
    </alternativeName>
    <alternativeName>
        <fullName evidence="2">Carboxylesterase BioH</fullName>
    </alternativeName>
</protein>
<gene>
    <name evidence="2" type="primary">bioH</name>
    <name type="ordered locus">KPN78578_37450</name>
    <name type="ORF">KPN_03782</name>
</gene>
<reference key="1">
    <citation type="submission" date="2006-09" db="EMBL/GenBank/DDBJ databases">
        <authorList>
            <consortium name="The Klebsiella pneumonia Genome Sequencing Project"/>
            <person name="McClelland M."/>
            <person name="Sanderson E.K."/>
            <person name="Spieth J."/>
            <person name="Clifton W.S."/>
            <person name="Latreille P."/>
            <person name="Sabo A."/>
            <person name="Pepin K."/>
            <person name="Bhonagiri V."/>
            <person name="Porwollik S."/>
            <person name="Ali J."/>
            <person name="Wilson R.K."/>
        </authorList>
    </citation>
    <scope>NUCLEOTIDE SEQUENCE [LARGE SCALE GENOMIC DNA]</scope>
    <source>
        <strain>ATCC 700721 / MGH 78578</strain>
    </source>
</reference>
<organism>
    <name type="scientific">Klebsiella pneumoniae subsp. pneumoniae (strain ATCC 700721 / MGH 78578)</name>
    <dbReference type="NCBI Taxonomy" id="272620"/>
    <lineage>
        <taxon>Bacteria</taxon>
        <taxon>Pseudomonadati</taxon>
        <taxon>Pseudomonadota</taxon>
        <taxon>Gammaproteobacteria</taxon>
        <taxon>Enterobacterales</taxon>
        <taxon>Enterobacteriaceae</taxon>
        <taxon>Klebsiella/Raoultella group</taxon>
        <taxon>Klebsiella</taxon>
        <taxon>Klebsiella pneumoniae complex</taxon>
    </lineage>
</organism>
<sequence>MNDIWWQTIGEGDCHLVLLHGWGLNAQVWDCITPQLASHFTLHLVDLPGYGRSGGFGAMSLEAMAQRVLEQAPPQAVWLGWSLGGLVASQVAIMRPERVQALVTVASSPCFAARDDWPGIKPEVLAGFQQQLSDDFQRTVERFLALQTMGTESARQDARALKQAVLSLPMPSAEALNGGLEILRTVDLRQALVRLPMPFLRLYGRLDGLVPRKIVPLLDDLWPESESILFDKAAHAPFVSHPAAFCEPLLALKTRLG</sequence>